<reference key="1">
    <citation type="journal article" date="2003" name="Nature">
        <title>The genome of a motile marine Synechococcus.</title>
        <authorList>
            <person name="Palenik B."/>
            <person name="Brahamsha B."/>
            <person name="Larimer F.W."/>
            <person name="Land M.L."/>
            <person name="Hauser L."/>
            <person name="Chain P."/>
            <person name="Lamerdin J.E."/>
            <person name="Regala W."/>
            <person name="Allen E.E."/>
            <person name="McCarren J."/>
            <person name="Paulsen I.T."/>
            <person name="Dufresne A."/>
            <person name="Partensky F."/>
            <person name="Webb E.A."/>
            <person name="Waterbury J."/>
        </authorList>
    </citation>
    <scope>NUCLEOTIDE SEQUENCE [LARGE SCALE GENOMIC DNA]</scope>
    <source>
        <strain>WH8102</strain>
    </source>
</reference>
<evidence type="ECO:0000255" key="1">
    <source>
        <dbReference type="HAMAP-Rule" id="MF_01365"/>
    </source>
</evidence>
<evidence type="ECO:0000305" key="2"/>
<feature type="chain" id="PRO_0000260965" description="Large ribosomal subunit protein uL6">
    <location>
        <begin position="1"/>
        <end position="179"/>
    </location>
</feature>
<keyword id="KW-0687">Ribonucleoprotein</keyword>
<keyword id="KW-0689">Ribosomal protein</keyword>
<keyword id="KW-0694">RNA-binding</keyword>
<keyword id="KW-0699">rRNA-binding</keyword>
<accession>Q7U4I6</accession>
<gene>
    <name evidence="1" type="primary">rplF</name>
    <name evidence="1" type="synonym">rpl6</name>
    <name type="ordered locus">SYNW2081</name>
</gene>
<organism>
    <name type="scientific">Parasynechococcus marenigrum (strain WH8102)</name>
    <dbReference type="NCBI Taxonomy" id="84588"/>
    <lineage>
        <taxon>Bacteria</taxon>
        <taxon>Bacillati</taxon>
        <taxon>Cyanobacteriota</taxon>
        <taxon>Cyanophyceae</taxon>
        <taxon>Synechococcales</taxon>
        <taxon>Prochlorococcaceae</taxon>
        <taxon>Parasynechococcus</taxon>
        <taxon>Parasynechococcus marenigrum</taxon>
    </lineage>
</organism>
<dbReference type="EMBL" id="BX569694">
    <property type="protein sequence ID" value="CAE08596.1"/>
    <property type="molecule type" value="Genomic_DNA"/>
</dbReference>
<dbReference type="RefSeq" id="WP_011128939.1">
    <property type="nucleotide sequence ID" value="NC_005070.1"/>
</dbReference>
<dbReference type="SMR" id="Q7U4I6"/>
<dbReference type="STRING" id="84588.SYNW2081"/>
<dbReference type="KEGG" id="syw:SYNW2081"/>
<dbReference type="eggNOG" id="COG0097">
    <property type="taxonomic scope" value="Bacteria"/>
</dbReference>
<dbReference type="HOGENOM" id="CLU_065464_1_2_3"/>
<dbReference type="Proteomes" id="UP000001422">
    <property type="component" value="Chromosome"/>
</dbReference>
<dbReference type="GO" id="GO:0022625">
    <property type="term" value="C:cytosolic large ribosomal subunit"/>
    <property type="evidence" value="ECO:0007669"/>
    <property type="project" value="TreeGrafter"/>
</dbReference>
<dbReference type="GO" id="GO:0019843">
    <property type="term" value="F:rRNA binding"/>
    <property type="evidence" value="ECO:0007669"/>
    <property type="project" value="UniProtKB-UniRule"/>
</dbReference>
<dbReference type="GO" id="GO:0003735">
    <property type="term" value="F:structural constituent of ribosome"/>
    <property type="evidence" value="ECO:0007669"/>
    <property type="project" value="InterPro"/>
</dbReference>
<dbReference type="GO" id="GO:0002181">
    <property type="term" value="P:cytoplasmic translation"/>
    <property type="evidence" value="ECO:0007669"/>
    <property type="project" value="TreeGrafter"/>
</dbReference>
<dbReference type="FunFam" id="3.90.930.12:FF:000001">
    <property type="entry name" value="50S ribosomal protein L6"/>
    <property type="match status" value="1"/>
</dbReference>
<dbReference type="FunFam" id="3.90.930.12:FF:000002">
    <property type="entry name" value="50S ribosomal protein L6"/>
    <property type="match status" value="1"/>
</dbReference>
<dbReference type="Gene3D" id="3.90.930.12">
    <property type="entry name" value="Ribosomal protein L6, alpha-beta domain"/>
    <property type="match status" value="2"/>
</dbReference>
<dbReference type="HAMAP" id="MF_01365_B">
    <property type="entry name" value="Ribosomal_uL6_B"/>
    <property type="match status" value="1"/>
</dbReference>
<dbReference type="InterPro" id="IPR000702">
    <property type="entry name" value="Ribosomal_uL6-like"/>
</dbReference>
<dbReference type="InterPro" id="IPR036789">
    <property type="entry name" value="Ribosomal_uL6-like_a/b-dom_sf"/>
</dbReference>
<dbReference type="InterPro" id="IPR020040">
    <property type="entry name" value="Ribosomal_uL6_a/b-dom"/>
</dbReference>
<dbReference type="InterPro" id="IPR019906">
    <property type="entry name" value="Ribosomal_uL6_bac-type"/>
</dbReference>
<dbReference type="InterPro" id="IPR002358">
    <property type="entry name" value="Ribosomal_uL6_CS"/>
</dbReference>
<dbReference type="NCBIfam" id="TIGR03654">
    <property type="entry name" value="L6_bact"/>
    <property type="match status" value="1"/>
</dbReference>
<dbReference type="PANTHER" id="PTHR11655">
    <property type="entry name" value="60S/50S RIBOSOMAL PROTEIN L6/L9"/>
    <property type="match status" value="1"/>
</dbReference>
<dbReference type="PANTHER" id="PTHR11655:SF14">
    <property type="entry name" value="LARGE RIBOSOMAL SUBUNIT PROTEIN UL6M"/>
    <property type="match status" value="1"/>
</dbReference>
<dbReference type="Pfam" id="PF00347">
    <property type="entry name" value="Ribosomal_L6"/>
    <property type="match status" value="2"/>
</dbReference>
<dbReference type="PIRSF" id="PIRSF002162">
    <property type="entry name" value="Ribosomal_L6"/>
    <property type="match status" value="1"/>
</dbReference>
<dbReference type="PRINTS" id="PR00059">
    <property type="entry name" value="RIBOSOMALL6"/>
</dbReference>
<dbReference type="SUPFAM" id="SSF56053">
    <property type="entry name" value="Ribosomal protein L6"/>
    <property type="match status" value="2"/>
</dbReference>
<dbReference type="PROSITE" id="PS00525">
    <property type="entry name" value="RIBOSOMAL_L6_1"/>
    <property type="match status" value="1"/>
</dbReference>
<name>RL6_PARMW</name>
<sequence length="179" mass="19251">MSRIGKNPVPVPDKVTVSLDGLTVKVKGPKGELERTLPDGVSVSQDNNCIVVAPSTSKRFSRERHGLCRTLVANMIEGVNNGYSKSLEIVGVGSRAQVKGKTLVVSAGYSHPVEMEPPEGITFKVENNTKVIVSGIDKELVGNEAAKVRAIRPPEPYKGKGIKYEGERIMRKAGKSGKK</sequence>
<protein>
    <recommendedName>
        <fullName evidence="1">Large ribosomal subunit protein uL6</fullName>
    </recommendedName>
    <alternativeName>
        <fullName evidence="2">50S ribosomal protein L6</fullName>
    </alternativeName>
</protein>
<comment type="function">
    <text evidence="1">This protein binds to the 23S rRNA, and is important in its secondary structure. It is located near the subunit interface in the base of the L7/L12 stalk, and near the tRNA binding site of the peptidyltransferase center.</text>
</comment>
<comment type="subunit">
    <text evidence="1">Part of the 50S ribosomal subunit.</text>
</comment>
<comment type="similarity">
    <text evidence="1">Belongs to the universal ribosomal protein uL6 family.</text>
</comment>
<proteinExistence type="inferred from homology"/>